<name>OTSA_ECO24</name>
<accession>A7ZN22</accession>
<gene>
    <name evidence="1" type="primary">otsA</name>
    <name type="ordered locus">EcE24377A_2128</name>
</gene>
<sequence length="474" mass="53611">MSRLVVVSNRIAPPDEHAASAGGLAVGILGALKAAGGLWFGWSGETGNEDQPLKKVKKGNITWASFNLSEQDLDEYYNQFSNAVLWPAFHYRLDLVQFQRPAWDGYLRVNALLADKLLPLLQDDDIIWIHDYHLLPFAHELRKRGVNNRIGFFLHIPFPTPEIFNALPTYDTLLEQLCDYDLLGFQTENDRLAFLDCLSNLTRVTTRSAKSHTAWGKAFRTEVYPIGIEPKEIAKQAAGPLPPKLAQLKAELKNVQNIFSVERLDYSKGLPERFLAYEALLEKYPQHHGKIRYTQIAPTSRGDVQAYQDIRHQLENEAGRINGKYGQLGWTPLYYLNQHFDRKLLMKIFRYSDVGLVTPLRDGMNLVAKEYVAAQDPANPGVLVLSQFAGAANELTSALIVNPYDRDEVAAALDRALTMSLAERISRHAEMLDVIVKNDINHWQECFISDLKQIVPRSAESQQRDKVATFPKLA</sequence>
<evidence type="ECO:0000250" key="1">
    <source>
        <dbReference type="UniProtKB" id="P31677"/>
    </source>
</evidence>
<protein>
    <recommendedName>
        <fullName evidence="1">Trehalose-6-phosphate synthase</fullName>
        <shortName evidence="1">TPS</shortName>
        <ecNumber evidence="1">2.4.1.15</ecNumber>
    </recommendedName>
    <alternativeName>
        <fullName evidence="1">Alpha,alpha-trehalose-phosphate synthase [UDP-forming]</fullName>
    </alternativeName>
    <alternativeName>
        <fullName evidence="1">Osmoregulatory trehalose synthesis protein A</fullName>
        <shortName evidence="1">OtsA</shortName>
    </alternativeName>
    <alternativeName>
        <fullName evidence="1">UDP-glucose-glucosephosphate glucosyltransferase</fullName>
    </alternativeName>
</protein>
<organism>
    <name type="scientific">Escherichia coli O139:H28 (strain E24377A / ETEC)</name>
    <dbReference type="NCBI Taxonomy" id="331111"/>
    <lineage>
        <taxon>Bacteria</taxon>
        <taxon>Pseudomonadati</taxon>
        <taxon>Pseudomonadota</taxon>
        <taxon>Gammaproteobacteria</taxon>
        <taxon>Enterobacterales</taxon>
        <taxon>Enterobacteriaceae</taxon>
        <taxon>Escherichia</taxon>
    </lineage>
</organism>
<keyword id="KW-0328">Glycosyltransferase</keyword>
<keyword id="KW-1185">Reference proteome</keyword>
<keyword id="KW-0808">Transferase</keyword>
<feature type="chain" id="PRO_0000348897" description="Trehalose-6-phosphate synthase">
    <location>
        <begin position="1"/>
        <end position="474"/>
    </location>
</feature>
<feature type="binding site" evidence="1">
    <location>
        <position position="10"/>
    </location>
    <ligand>
        <name>D-glucose 6-phosphate</name>
        <dbReference type="ChEBI" id="CHEBI:61548"/>
    </ligand>
</feature>
<feature type="binding site" evidence="1">
    <location>
        <begin position="22"/>
        <end position="23"/>
    </location>
    <ligand>
        <name>UDP-alpha-D-glucose</name>
        <dbReference type="ChEBI" id="CHEBI:58885"/>
    </ligand>
</feature>
<feature type="binding site" evidence="1">
    <location>
        <position position="77"/>
    </location>
    <ligand>
        <name>D-glucose 6-phosphate</name>
        <dbReference type="ChEBI" id="CHEBI:61548"/>
    </ligand>
</feature>
<feature type="binding site" evidence="1">
    <location>
        <position position="131"/>
    </location>
    <ligand>
        <name>D-glucose 6-phosphate</name>
        <dbReference type="ChEBI" id="CHEBI:61548"/>
    </ligand>
</feature>
<feature type="binding site" evidence="1">
    <location>
        <position position="263"/>
    </location>
    <ligand>
        <name>UDP-alpha-D-glucose</name>
        <dbReference type="ChEBI" id="CHEBI:58885"/>
    </ligand>
</feature>
<feature type="binding site" evidence="1">
    <location>
        <position position="268"/>
    </location>
    <ligand>
        <name>UDP-alpha-D-glucose</name>
        <dbReference type="ChEBI" id="CHEBI:58885"/>
    </ligand>
</feature>
<feature type="binding site" evidence="1">
    <location>
        <position position="301"/>
    </location>
    <ligand>
        <name>D-glucose 6-phosphate</name>
        <dbReference type="ChEBI" id="CHEBI:61548"/>
    </ligand>
</feature>
<feature type="binding site" evidence="1">
    <location>
        <position position="340"/>
    </location>
    <ligand>
        <name>UDP-alpha-D-glucose</name>
        <dbReference type="ChEBI" id="CHEBI:58885"/>
    </ligand>
</feature>
<feature type="binding site" evidence="1">
    <location>
        <begin position="366"/>
        <end position="370"/>
    </location>
    <ligand>
        <name>UDP-alpha-D-glucose</name>
        <dbReference type="ChEBI" id="CHEBI:58885"/>
    </ligand>
</feature>
<feature type="site" description="Involved in alpha anomer selectivity" evidence="1">
    <location>
        <position position="86"/>
    </location>
</feature>
<feature type="site" description="Involved in alpha anomer selectivity" evidence="1">
    <location>
        <position position="156"/>
    </location>
</feature>
<reference key="1">
    <citation type="journal article" date="2008" name="J. Bacteriol.">
        <title>The pangenome structure of Escherichia coli: comparative genomic analysis of E. coli commensal and pathogenic isolates.</title>
        <authorList>
            <person name="Rasko D.A."/>
            <person name="Rosovitz M.J."/>
            <person name="Myers G.S.A."/>
            <person name="Mongodin E.F."/>
            <person name="Fricke W.F."/>
            <person name="Gajer P."/>
            <person name="Crabtree J."/>
            <person name="Sebaihia M."/>
            <person name="Thomson N.R."/>
            <person name="Chaudhuri R."/>
            <person name="Henderson I.R."/>
            <person name="Sperandio V."/>
            <person name="Ravel J."/>
        </authorList>
    </citation>
    <scope>NUCLEOTIDE SEQUENCE [LARGE SCALE GENOMIC DNA]</scope>
    <source>
        <strain>E24377A / ETEC</strain>
    </source>
</reference>
<proteinExistence type="inferred from homology"/>
<comment type="function">
    <text evidence="1">Probably involved in the osmoprotection via the biosynthesis of trehalose. Catalyzes the transfer of glucose from UDP-alpha-D-glucose (UDP-Glc) to D-glucose 6-phosphate (Glc-6-P) to form trehalose-6-phosphate. Acts with retention of the anomeric configuration of the UDP-sugar donor.</text>
</comment>
<comment type="catalytic activity">
    <reaction evidence="1">
        <text>D-glucose 6-phosphate + UDP-alpha-D-glucose = alpha,alpha-trehalose 6-phosphate + UDP + H(+)</text>
        <dbReference type="Rhea" id="RHEA:18889"/>
        <dbReference type="ChEBI" id="CHEBI:15378"/>
        <dbReference type="ChEBI" id="CHEBI:58223"/>
        <dbReference type="ChEBI" id="CHEBI:58429"/>
        <dbReference type="ChEBI" id="CHEBI:58885"/>
        <dbReference type="ChEBI" id="CHEBI:61548"/>
        <dbReference type="EC" id="2.4.1.15"/>
    </reaction>
</comment>
<comment type="pathway">
    <text evidence="1">Glycan biosynthesis; trehalose biosynthesis.</text>
</comment>
<comment type="subunit">
    <text evidence="1">Homotetramer.</text>
</comment>
<comment type="similarity">
    <text evidence="1">Belongs to the glycosyltransferase 20 family.</text>
</comment>
<dbReference type="EC" id="2.4.1.15" evidence="1"/>
<dbReference type="EMBL" id="CP000800">
    <property type="protein sequence ID" value="ABV19268.1"/>
    <property type="molecule type" value="Genomic_DNA"/>
</dbReference>
<dbReference type="RefSeq" id="WP_001295646.1">
    <property type="nucleotide sequence ID" value="NC_009801.1"/>
</dbReference>
<dbReference type="SMR" id="A7ZN22"/>
<dbReference type="CAZy" id="GT20">
    <property type="family name" value="Glycosyltransferase Family 20"/>
</dbReference>
<dbReference type="GeneID" id="93776199"/>
<dbReference type="KEGG" id="ecw:EcE24377A_2128"/>
<dbReference type="HOGENOM" id="CLU_002351_7_1_6"/>
<dbReference type="UniPathway" id="UPA00299"/>
<dbReference type="Proteomes" id="UP000001122">
    <property type="component" value="Chromosome"/>
</dbReference>
<dbReference type="GO" id="GO:0003825">
    <property type="term" value="F:alpha,alpha-trehalose-phosphate synthase (UDP-forming) activity"/>
    <property type="evidence" value="ECO:0007669"/>
    <property type="project" value="UniProtKB-EC"/>
</dbReference>
<dbReference type="GO" id="GO:0005992">
    <property type="term" value="P:trehalose biosynthetic process"/>
    <property type="evidence" value="ECO:0007669"/>
    <property type="project" value="UniProtKB-UniPathway"/>
</dbReference>
<dbReference type="CDD" id="cd03788">
    <property type="entry name" value="GT20_TPS"/>
    <property type="match status" value="1"/>
</dbReference>
<dbReference type="FunFam" id="3.40.50.2000:FF:000024">
    <property type="entry name" value="Trehalose-6-phosphate synthase"/>
    <property type="match status" value="1"/>
</dbReference>
<dbReference type="Gene3D" id="3.40.50.2000">
    <property type="entry name" value="Glycogen Phosphorylase B"/>
    <property type="match status" value="2"/>
</dbReference>
<dbReference type="InterPro" id="IPR001830">
    <property type="entry name" value="Glyco_trans_20"/>
</dbReference>
<dbReference type="InterPro" id="IPR012766">
    <property type="entry name" value="Trehalose_OtsA"/>
</dbReference>
<dbReference type="NCBIfam" id="NF007513">
    <property type="entry name" value="PRK10117.1"/>
    <property type="match status" value="1"/>
</dbReference>
<dbReference type="NCBIfam" id="TIGR02400">
    <property type="entry name" value="trehalose_OtsA"/>
    <property type="match status" value="1"/>
</dbReference>
<dbReference type="PANTHER" id="PTHR10788:SF106">
    <property type="entry name" value="BCDNA.GH08860"/>
    <property type="match status" value="1"/>
</dbReference>
<dbReference type="PANTHER" id="PTHR10788">
    <property type="entry name" value="TREHALOSE-6-PHOSPHATE SYNTHASE"/>
    <property type="match status" value="1"/>
</dbReference>
<dbReference type="Pfam" id="PF00982">
    <property type="entry name" value="Glyco_transf_20"/>
    <property type="match status" value="1"/>
</dbReference>
<dbReference type="SUPFAM" id="SSF53756">
    <property type="entry name" value="UDP-Glycosyltransferase/glycogen phosphorylase"/>
    <property type="match status" value="1"/>
</dbReference>